<gene>
    <name evidence="1" type="primary">kdpA</name>
    <name type="ordered locus">SEN0670</name>
</gene>
<organism>
    <name type="scientific">Salmonella enteritidis PT4 (strain P125109)</name>
    <dbReference type="NCBI Taxonomy" id="550537"/>
    <lineage>
        <taxon>Bacteria</taxon>
        <taxon>Pseudomonadati</taxon>
        <taxon>Pseudomonadota</taxon>
        <taxon>Gammaproteobacteria</taxon>
        <taxon>Enterobacterales</taxon>
        <taxon>Enterobacteriaceae</taxon>
        <taxon>Salmonella</taxon>
    </lineage>
</organism>
<comment type="function">
    <text evidence="1">Part of the high-affinity ATP-driven potassium transport (or Kdp) system, which catalyzes the hydrolysis of ATP coupled with the electrogenic transport of potassium into the cytoplasm. This subunit binds the periplasmic potassium ions and delivers the ions to the membrane domain of KdpB through an intramembrane tunnel.</text>
</comment>
<comment type="subunit">
    <text evidence="1">The system is composed of three essential subunits: KdpA, KdpB and KdpC.</text>
</comment>
<comment type="subcellular location">
    <subcellularLocation>
        <location evidence="1">Cell inner membrane</location>
        <topology evidence="1">Multi-pass membrane protein</topology>
    </subcellularLocation>
</comment>
<comment type="similarity">
    <text evidence="1">Belongs to the KdpA family.</text>
</comment>
<proteinExistence type="inferred from homology"/>
<protein>
    <recommendedName>
        <fullName evidence="1">Potassium-transporting ATPase potassium-binding subunit</fullName>
    </recommendedName>
    <alternativeName>
        <fullName evidence="1">ATP phosphohydrolase [potassium-transporting] A chain</fullName>
    </alternativeName>
    <alternativeName>
        <fullName evidence="1">Potassium-binding and translocating subunit A</fullName>
    </alternativeName>
    <alternativeName>
        <fullName evidence="1">Potassium-translocating ATPase A chain</fullName>
    </alternativeName>
</protein>
<reference key="1">
    <citation type="journal article" date="2008" name="Genome Res.">
        <title>Comparative genome analysis of Salmonella enteritidis PT4 and Salmonella gallinarum 287/91 provides insights into evolutionary and host adaptation pathways.</title>
        <authorList>
            <person name="Thomson N.R."/>
            <person name="Clayton D.J."/>
            <person name="Windhorst D."/>
            <person name="Vernikos G."/>
            <person name="Davidson S."/>
            <person name="Churcher C."/>
            <person name="Quail M.A."/>
            <person name="Stevens M."/>
            <person name="Jones M.A."/>
            <person name="Watson M."/>
            <person name="Barron A."/>
            <person name="Layton A."/>
            <person name="Pickard D."/>
            <person name="Kingsley R.A."/>
            <person name="Bignell A."/>
            <person name="Clark L."/>
            <person name="Harris B."/>
            <person name="Ormond D."/>
            <person name="Abdellah Z."/>
            <person name="Brooks K."/>
            <person name="Cherevach I."/>
            <person name="Chillingworth T."/>
            <person name="Woodward J."/>
            <person name="Norberczak H."/>
            <person name="Lord A."/>
            <person name="Arrowsmith C."/>
            <person name="Jagels K."/>
            <person name="Moule S."/>
            <person name="Mungall K."/>
            <person name="Saunders M."/>
            <person name="Whitehead S."/>
            <person name="Chabalgoity J.A."/>
            <person name="Maskell D."/>
            <person name="Humphreys T."/>
            <person name="Roberts M."/>
            <person name="Barrow P.A."/>
            <person name="Dougan G."/>
            <person name="Parkhill J."/>
        </authorList>
    </citation>
    <scope>NUCLEOTIDE SEQUENCE [LARGE SCALE GENOMIC DNA]</scope>
    <source>
        <strain>P125109</strain>
    </source>
</reference>
<evidence type="ECO:0000255" key="1">
    <source>
        <dbReference type="HAMAP-Rule" id="MF_00275"/>
    </source>
</evidence>
<name>KDPA_SALEP</name>
<keyword id="KW-0997">Cell inner membrane</keyword>
<keyword id="KW-1003">Cell membrane</keyword>
<keyword id="KW-0406">Ion transport</keyword>
<keyword id="KW-0472">Membrane</keyword>
<keyword id="KW-0630">Potassium</keyword>
<keyword id="KW-0633">Potassium transport</keyword>
<keyword id="KW-0812">Transmembrane</keyword>
<keyword id="KW-1133">Transmembrane helix</keyword>
<keyword id="KW-0813">Transport</keyword>
<dbReference type="EMBL" id="AM933172">
    <property type="protein sequence ID" value="CAR32256.1"/>
    <property type="molecule type" value="Genomic_DNA"/>
</dbReference>
<dbReference type="RefSeq" id="WP_000730078.1">
    <property type="nucleotide sequence ID" value="NC_011294.1"/>
</dbReference>
<dbReference type="SMR" id="B5QWF0"/>
<dbReference type="KEGG" id="set:SEN0670"/>
<dbReference type="HOGENOM" id="CLU_018614_3_0_6"/>
<dbReference type="Proteomes" id="UP000000613">
    <property type="component" value="Chromosome"/>
</dbReference>
<dbReference type="GO" id="GO:0005886">
    <property type="term" value="C:plasma membrane"/>
    <property type="evidence" value="ECO:0007669"/>
    <property type="project" value="UniProtKB-SubCell"/>
</dbReference>
<dbReference type="GO" id="GO:0008556">
    <property type="term" value="F:P-type potassium transmembrane transporter activity"/>
    <property type="evidence" value="ECO:0007669"/>
    <property type="project" value="InterPro"/>
</dbReference>
<dbReference type="GO" id="GO:0030955">
    <property type="term" value="F:potassium ion binding"/>
    <property type="evidence" value="ECO:0007669"/>
    <property type="project" value="UniProtKB-UniRule"/>
</dbReference>
<dbReference type="HAMAP" id="MF_00275">
    <property type="entry name" value="KdpA"/>
    <property type="match status" value="1"/>
</dbReference>
<dbReference type="InterPro" id="IPR004623">
    <property type="entry name" value="KdpA"/>
</dbReference>
<dbReference type="NCBIfam" id="TIGR00680">
    <property type="entry name" value="kdpA"/>
    <property type="match status" value="1"/>
</dbReference>
<dbReference type="PANTHER" id="PTHR30607">
    <property type="entry name" value="POTASSIUM-TRANSPORTING ATPASE A CHAIN"/>
    <property type="match status" value="1"/>
</dbReference>
<dbReference type="PANTHER" id="PTHR30607:SF2">
    <property type="entry name" value="POTASSIUM-TRANSPORTING ATPASE POTASSIUM-BINDING SUBUNIT"/>
    <property type="match status" value="1"/>
</dbReference>
<dbReference type="Pfam" id="PF03814">
    <property type="entry name" value="KdpA"/>
    <property type="match status" value="1"/>
</dbReference>
<dbReference type="PIRSF" id="PIRSF001294">
    <property type="entry name" value="K_ATPaseA"/>
    <property type="match status" value="1"/>
</dbReference>
<sequence>MAAQGFLLIASFLLILLVLAKPLGSGLARLIAAVPLPGVAGVERILWRTLGITDHEMNWRQYLLALLTLNLLGLGILFCLLFWQEWLPLNPQRLPGLSWDLALNTAVSFVTNTNWQAYSGESTLSYFSQMAGLTVQNFLSAATGIAVVFALIRAFTRQNVHTLGNAWQDLVRITLWILFPVALIIALFFIQQGVPQNLSAYQPITTLEGAKQLLPMGPVASQEAIKMLGTNGGGFFNANSSHPFENPTALTNLAQMLAIFLIPAALCFAFGEAAGDRRQGRALLWAMSFIFVVCVAVVMWAEVQGNPHLLAAGADSSVNMEGKETRFGVLASSLFAVVTTAASCGAVNAMHDSFTALGGMVPMWLMQIGEVVFGGVGSGLYGMLLFVLLAVFIAGLMIGRTPEYLGKKIDVREMKMTALAILVTPMLVLLGSALAMMTDAGRSAMLNPGPHGFSEVLYAVSSAANNNGSAFAGLSANSPFWNCLLAFCMFVGRFGVIIPVMAIAGSLVSKKVQPASQGTLATHGALFIGLLIGTVLLVGALTFIPALALGPVAEHFSLP</sequence>
<accession>B5QWF0</accession>
<feature type="chain" id="PRO_1000114700" description="Potassium-transporting ATPase potassium-binding subunit">
    <location>
        <begin position="1"/>
        <end position="559"/>
    </location>
</feature>
<feature type="transmembrane region" description="Helical" evidence="1">
    <location>
        <begin position="5"/>
        <end position="25"/>
    </location>
</feature>
<feature type="transmembrane region" description="Helical" evidence="1">
    <location>
        <begin position="27"/>
        <end position="47"/>
    </location>
</feature>
<feature type="transmembrane region" description="Helical" evidence="1">
    <location>
        <begin position="63"/>
        <end position="83"/>
    </location>
</feature>
<feature type="transmembrane region" description="Helical" evidence="1">
    <location>
        <begin position="132"/>
        <end position="152"/>
    </location>
</feature>
<feature type="transmembrane region" description="Helical" evidence="1">
    <location>
        <begin position="170"/>
        <end position="190"/>
    </location>
</feature>
<feature type="transmembrane region" description="Helical" evidence="1">
    <location>
        <begin position="253"/>
        <end position="273"/>
    </location>
</feature>
<feature type="transmembrane region" description="Helical" evidence="1">
    <location>
        <begin position="283"/>
        <end position="303"/>
    </location>
</feature>
<feature type="transmembrane region" description="Helical" evidence="1">
    <location>
        <begin position="327"/>
        <end position="347"/>
    </location>
</feature>
<feature type="transmembrane region" description="Helical" evidence="1">
    <location>
        <begin position="356"/>
        <end position="376"/>
    </location>
</feature>
<feature type="transmembrane region" description="Helical" evidence="1">
    <location>
        <begin position="379"/>
        <end position="399"/>
    </location>
</feature>
<feature type="transmembrane region" description="Helical" evidence="1">
    <location>
        <begin position="416"/>
        <end position="436"/>
    </location>
</feature>
<feature type="transmembrane region" description="Helical" evidence="1">
    <location>
        <begin position="484"/>
        <end position="504"/>
    </location>
</feature>
<feature type="transmembrane region" description="Helical" evidence="1">
    <location>
        <begin position="524"/>
        <end position="544"/>
    </location>
</feature>